<gene>
    <name evidence="1" type="primary">murR</name>
    <name type="ordered locus">SSON_2516</name>
</gene>
<feature type="chain" id="PRO_0000387776" description="HTH-type transcriptional regulator MurR">
    <location>
        <begin position="1"/>
        <end position="285"/>
    </location>
</feature>
<feature type="domain" description="HTH rpiR-type" evidence="1">
    <location>
        <begin position="1"/>
        <end position="77"/>
    </location>
</feature>
<feature type="domain" description="SIS" evidence="1">
    <location>
        <begin position="128"/>
        <end position="268"/>
    </location>
</feature>
<feature type="DNA-binding region" description="H-T-H motif" evidence="1">
    <location>
        <begin position="37"/>
        <end position="56"/>
    </location>
</feature>
<protein>
    <recommendedName>
        <fullName evidence="1">HTH-type transcriptional regulator MurR</fullName>
    </recommendedName>
    <alternativeName>
        <fullName evidence="1">MurPQ operon repressor</fullName>
    </alternativeName>
</protein>
<proteinExistence type="inferred from homology"/>
<accession>Q3YZB5</accession>
<keyword id="KW-0119">Carbohydrate metabolism</keyword>
<keyword id="KW-0238">DNA-binding</keyword>
<keyword id="KW-1185">Reference proteome</keyword>
<keyword id="KW-0678">Repressor</keyword>
<keyword id="KW-0804">Transcription</keyword>
<keyword id="KW-0805">Transcription regulation</keyword>
<organism>
    <name type="scientific">Shigella sonnei (strain Ss046)</name>
    <dbReference type="NCBI Taxonomy" id="300269"/>
    <lineage>
        <taxon>Bacteria</taxon>
        <taxon>Pseudomonadati</taxon>
        <taxon>Pseudomonadota</taxon>
        <taxon>Gammaproteobacteria</taxon>
        <taxon>Enterobacterales</taxon>
        <taxon>Enterobacteriaceae</taxon>
        <taxon>Shigella</taxon>
    </lineage>
</organism>
<comment type="function">
    <text evidence="1">Represses the expression of the murPQ operon involved in the uptake and degradation of N-acetylmuramic acid (MurNAc). Binds to two adjacent inverted repeats within the operator region. MurNAc 6-phosphate, the substrate of MurQ, is the specific inducer that weakens binding of MurR to the operator.</text>
</comment>
<comment type="pathway">
    <text>Amino-sugar metabolism; N-acetylmuramate degradation [regulation].</text>
</comment>
<comment type="subunit">
    <text evidence="1">Homotetramer.</text>
</comment>
<name>MURR_SHISS</name>
<reference key="1">
    <citation type="journal article" date="2005" name="Nucleic Acids Res.">
        <title>Genome dynamics and diversity of Shigella species, the etiologic agents of bacillary dysentery.</title>
        <authorList>
            <person name="Yang F."/>
            <person name="Yang J."/>
            <person name="Zhang X."/>
            <person name="Chen L."/>
            <person name="Jiang Y."/>
            <person name="Yan Y."/>
            <person name="Tang X."/>
            <person name="Wang J."/>
            <person name="Xiong Z."/>
            <person name="Dong J."/>
            <person name="Xue Y."/>
            <person name="Zhu Y."/>
            <person name="Xu X."/>
            <person name="Sun L."/>
            <person name="Chen S."/>
            <person name="Nie H."/>
            <person name="Peng J."/>
            <person name="Xu J."/>
            <person name="Wang Y."/>
            <person name="Yuan Z."/>
            <person name="Wen Y."/>
            <person name="Yao Z."/>
            <person name="Shen Y."/>
            <person name="Qiang B."/>
            <person name="Hou Y."/>
            <person name="Yu J."/>
            <person name="Jin Q."/>
        </authorList>
    </citation>
    <scope>NUCLEOTIDE SEQUENCE [LARGE SCALE GENOMIC DNA]</scope>
    <source>
        <strain>Ss046</strain>
    </source>
</reference>
<sequence length="285" mass="31425">MLYLTKIRNAESEFTENEQKIADFLRANVSELKSVSSRKMAKQLGISQSSIVKFAQKLGAQGFTELRMALIGEYSASREKTNATALHLHSSITSDDSLEVIARKLNREKELALEQTCALFDYARLQKIIEVISKAPFIQITGLGGSALVGRDLSFKLMKIGYRVAYEADTHVQATVSQALKKGDVQIAISYSGSKKEIVLCAEAARKQGATVIAITSLADSPLRRLAHFTLDTVSGETEWRSSSMSTRTAQNSVTDLLFVGLVQLNDVESLKMIQRSSELTQRLK</sequence>
<evidence type="ECO:0000255" key="1">
    <source>
        <dbReference type="HAMAP-Rule" id="MF_02108"/>
    </source>
</evidence>
<dbReference type="EMBL" id="CP000038">
    <property type="protein sequence ID" value="AAZ89147.1"/>
    <property type="molecule type" value="Genomic_DNA"/>
</dbReference>
<dbReference type="RefSeq" id="WP_000966441.1">
    <property type="nucleotide sequence ID" value="NC_007384.1"/>
</dbReference>
<dbReference type="SMR" id="Q3YZB5"/>
<dbReference type="GeneID" id="93774704"/>
<dbReference type="KEGG" id="ssn:SSON_2516"/>
<dbReference type="HOGENOM" id="CLU_055769_0_2_6"/>
<dbReference type="UniPathway" id="UPA00342"/>
<dbReference type="Proteomes" id="UP000002529">
    <property type="component" value="Chromosome"/>
</dbReference>
<dbReference type="GO" id="GO:0097367">
    <property type="term" value="F:carbohydrate derivative binding"/>
    <property type="evidence" value="ECO:0007669"/>
    <property type="project" value="InterPro"/>
</dbReference>
<dbReference type="GO" id="GO:0003677">
    <property type="term" value="F:DNA binding"/>
    <property type="evidence" value="ECO:0007669"/>
    <property type="project" value="UniProtKB-KW"/>
</dbReference>
<dbReference type="GO" id="GO:0003700">
    <property type="term" value="F:DNA-binding transcription factor activity"/>
    <property type="evidence" value="ECO:0007669"/>
    <property type="project" value="UniProtKB-UniRule"/>
</dbReference>
<dbReference type="GO" id="GO:1901135">
    <property type="term" value="P:carbohydrate derivative metabolic process"/>
    <property type="evidence" value="ECO:0007669"/>
    <property type="project" value="InterPro"/>
</dbReference>
<dbReference type="GO" id="GO:0097173">
    <property type="term" value="P:N-acetylmuramic acid catabolic process"/>
    <property type="evidence" value="ECO:0007669"/>
    <property type="project" value="UniProtKB-UniPathway"/>
</dbReference>
<dbReference type="GO" id="GO:0045892">
    <property type="term" value="P:negative regulation of DNA-templated transcription"/>
    <property type="evidence" value="ECO:0007669"/>
    <property type="project" value="UniProtKB-UniRule"/>
</dbReference>
<dbReference type="GO" id="GO:0043470">
    <property type="term" value="P:regulation of carbohydrate catabolic process"/>
    <property type="evidence" value="ECO:0007669"/>
    <property type="project" value="UniProtKB-UniRule"/>
</dbReference>
<dbReference type="CDD" id="cd05013">
    <property type="entry name" value="SIS_RpiR"/>
    <property type="match status" value="1"/>
</dbReference>
<dbReference type="FunFam" id="3.40.50.10490:FF:000028">
    <property type="entry name" value="HTH-type transcriptional regulator MurR"/>
    <property type="match status" value="1"/>
</dbReference>
<dbReference type="Gene3D" id="3.40.50.10490">
    <property type="entry name" value="Glucose-6-phosphate isomerase like protein, domain 1"/>
    <property type="match status" value="1"/>
</dbReference>
<dbReference type="Gene3D" id="1.10.10.10">
    <property type="entry name" value="Winged helix-like DNA-binding domain superfamily/Winged helix DNA-binding domain"/>
    <property type="match status" value="1"/>
</dbReference>
<dbReference type="HAMAP" id="MF_02108">
    <property type="entry name" value="HTH_type_MurR"/>
    <property type="match status" value="1"/>
</dbReference>
<dbReference type="InterPro" id="IPR009057">
    <property type="entry name" value="Homeodomain-like_sf"/>
</dbReference>
<dbReference type="InterPro" id="IPR000281">
    <property type="entry name" value="HTH_RpiR"/>
</dbReference>
<dbReference type="InterPro" id="IPR047640">
    <property type="entry name" value="RpiR-like"/>
</dbReference>
<dbReference type="InterPro" id="IPR035472">
    <property type="entry name" value="RpiR-like_SIS"/>
</dbReference>
<dbReference type="InterPro" id="IPR001347">
    <property type="entry name" value="SIS_dom"/>
</dbReference>
<dbReference type="InterPro" id="IPR046348">
    <property type="entry name" value="SIS_dom_sf"/>
</dbReference>
<dbReference type="InterPro" id="IPR022821">
    <property type="entry name" value="Tscrpt_reg_HTH_MurR"/>
</dbReference>
<dbReference type="InterPro" id="IPR036388">
    <property type="entry name" value="WH-like_DNA-bd_sf"/>
</dbReference>
<dbReference type="NCBIfam" id="NF012026">
    <property type="entry name" value="PRK15482.1"/>
    <property type="match status" value="1"/>
</dbReference>
<dbReference type="PANTHER" id="PTHR30514">
    <property type="entry name" value="GLUCOKINASE"/>
    <property type="match status" value="1"/>
</dbReference>
<dbReference type="PANTHER" id="PTHR30514:SF17">
    <property type="entry name" value="HTH-TYPE TRANSCRIPTIONAL REGULATOR MURR"/>
    <property type="match status" value="1"/>
</dbReference>
<dbReference type="Pfam" id="PF01418">
    <property type="entry name" value="HTH_6"/>
    <property type="match status" value="1"/>
</dbReference>
<dbReference type="Pfam" id="PF01380">
    <property type="entry name" value="SIS"/>
    <property type="match status" value="1"/>
</dbReference>
<dbReference type="SUPFAM" id="SSF46689">
    <property type="entry name" value="Homeodomain-like"/>
    <property type="match status" value="1"/>
</dbReference>
<dbReference type="SUPFAM" id="SSF53697">
    <property type="entry name" value="SIS domain"/>
    <property type="match status" value="1"/>
</dbReference>
<dbReference type="PROSITE" id="PS51071">
    <property type="entry name" value="HTH_RPIR"/>
    <property type="match status" value="1"/>
</dbReference>
<dbReference type="PROSITE" id="PS51464">
    <property type="entry name" value="SIS"/>
    <property type="match status" value="1"/>
</dbReference>